<keyword id="KW-0025">Alternative splicing</keyword>
<keyword id="KW-0090">Biological rhythms</keyword>
<keyword id="KW-0157">Chromophore</keyword>
<keyword id="KW-0963">Cytoplasm</keyword>
<keyword id="KW-0274">FAD</keyword>
<keyword id="KW-0285">Flavoprotein</keyword>
<keyword id="KW-1017">Isopeptide bond</keyword>
<keyword id="KW-0547">Nucleotide-binding</keyword>
<keyword id="KW-0539">Nucleus</keyword>
<keyword id="KW-0597">Phosphoprotein</keyword>
<keyword id="KW-0600">Photoreceptor protein</keyword>
<keyword id="KW-1267">Proteomics identification</keyword>
<keyword id="KW-0675">Receptor</keyword>
<keyword id="KW-1185">Reference proteome</keyword>
<keyword id="KW-0678">Repressor</keyword>
<keyword id="KW-0716">Sensory transduction</keyword>
<keyword id="KW-0804">Transcription</keyword>
<keyword id="KW-0805">Transcription regulation</keyword>
<keyword id="KW-0832">Ubl conjugation</keyword>
<proteinExistence type="evidence at protein level"/>
<name>CRY2_HUMAN</name>
<reference key="1">
    <citation type="journal article" date="1996" name="Biochemistry">
        <title>Putative human blue-light photoreceptors hCRY1 and hCRY2 are flavoproteins.</title>
        <authorList>
            <person name="Hsu D.S."/>
            <person name="Zhao X."/>
            <person name="Zhao S."/>
            <person name="Kazantsev A."/>
            <person name="Wang R.-P."/>
            <person name="Todo T."/>
            <person name="Wei Y.-F."/>
            <person name="Sancar A."/>
        </authorList>
    </citation>
    <scope>NUCLEOTIDE SEQUENCE [MRNA] (ISOFORM 1)</scope>
    <scope>CHARACTERIZATION</scope>
    <scope>TISSUE SPECIFICITY</scope>
    <source>
        <tissue>Fetal brain</tissue>
    </source>
</reference>
<reference key="2">
    <citation type="journal article" date="2004" name="Nat. Genet.">
        <title>Complete sequencing and characterization of 21,243 full-length human cDNAs.</title>
        <authorList>
            <person name="Ota T."/>
            <person name="Suzuki Y."/>
            <person name="Nishikawa T."/>
            <person name="Otsuki T."/>
            <person name="Sugiyama T."/>
            <person name="Irie R."/>
            <person name="Wakamatsu A."/>
            <person name="Hayashi K."/>
            <person name="Sato H."/>
            <person name="Nagai K."/>
            <person name="Kimura K."/>
            <person name="Makita H."/>
            <person name="Sekine M."/>
            <person name="Obayashi M."/>
            <person name="Nishi T."/>
            <person name="Shibahara T."/>
            <person name="Tanaka T."/>
            <person name="Ishii S."/>
            <person name="Yamamoto J."/>
            <person name="Saito K."/>
            <person name="Kawai Y."/>
            <person name="Isono Y."/>
            <person name="Nakamura Y."/>
            <person name="Nagahari K."/>
            <person name="Murakami K."/>
            <person name="Yasuda T."/>
            <person name="Iwayanagi T."/>
            <person name="Wagatsuma M."/>
            <person name="Shiratori A."/>
            <person name="Sudo H."/>
            <person name="Hosoiri T."/>
            <person name="Kaku Y."/>
            <person name="Kodaira H."/>
            <person name="Kondo H."/>
            <person name="Sugawara M."/>
            <person name="Takahashi M."/>
            <person name="Kanda K."/>
            <person name="Yokoi T."/>
            <person name="Furuya T."/>
            <person name="Kikkawa E."/>
            <person name="Omura Y."/>
            <person name="Abe K."/>
            <person name="Kamihara K."/>
            <person name="Katsuta N."/>
            <person name="Sato K."/>
            <person name="Tanikawa M."/>
            <person name="Yamazaki M."/>
            <person name="Ninomiya K."/>
            <person name="Ishibashi T."/>
            <person name="Yamashita H."/>
            <person name="Murakawa K."/>
            <person name="Fujimori K."/>
            <person name="Tanai H."/>
            <person name="Kimata M."/>
            <person name="Watanabe M."/>
            <person name="Hiraoka S."/>
            <person name="Chiba Y."/>
            <person name="Ishida S."/>
            <person name="Ono Y."/>
            <person name="Takiguchi S."/>
            <person name="Watanabe S."/>
            <person name="Yosida M."/>
            <person name="Hotuta T."/>
            <person name="Kusano J."/>
            <person name="Kanehori K."/>
            <person name="Takahashi-Fujii A."/>
            <person name="Hara H."/>
            <person name="Tanase T.-O."/>
            <person name="Nomura Y."/>
            <person name="Togiya S."/>
            <person name="Komai F."/>
            <person name="Hara R."/>
            <person name="Takeuchi K."/>
            <person name="Arita M."/>
            <person name="Imose N."/>
            <person name="Musashino K."/>
            <person name="Yuuki H."/>
            <person name="Oshima A."/>
            <person name="Sasaki N."/>
            <person name="Aotsuka S."/>
            <person name="Yoshikawa Y."/>
            <person name="Matsunawa H."/>
            <person name="Ichihara T."/>
            <person name="Shiohata N."/>
            <person name="Sano S."/>
            <person name="Moriya S."/>
            <person name="Momiyama H."/>
            <person name="Satoh N."/>
            <person name="Takami S."/>
            <person name="Terashima Y."/>
            <person name="Suzuki O."/>
            <person name="Nakagawa S."/>
            <person name="Senoh A."/>
            <person name="Mizoguchi H."/>
            <person name="Goto Y."/>
            <person name="Shimizu F."/>
            <person name="Wakebe H."/>
            <person name="Hishigaki H."/>
            <person name="Watanabe T."/>
            <person name="Sugiyama A."/>
            <person name="Takemoto M."/>
            <person name="Kawakami B."/>
            <person name="Yamazaki M."/>
            <person name="Watanabe K."/>
            <person name="Kumagai A."/>
            <person name="Itakura S."/>
            <person name="Fukuzumi Y."/>
            <person name="Fujimori Y."/>
            <person name="Komiyama M."/>
            <person name="Tashiro H."/>
            <person name="Tanigami A."/>
            <person name="Fujiwara T."/>
            <person name="Ono T."/>
            <person name="Yamada K."/>
            <person name="Fujii Y."/>
            <person name="Ozaki K."/>
            <person name="Hirao M."/>
            <person name="Ohmori Y."/>
            <person name="Kawabata A."/>
            <person name="Hikiji T."/>
            <person name="Kobatake N."/>
            <person name="Inagaki H."/>
            <person name="Ikema Y."/>
            <person name="Okamoto S."/>
            <person name="Okitani R."/>
            <person name="Kawakami T."/>
            <person name="Noguchi S."/>
            <person name="Itoh T."/>
            <person name="Shigeta K."/>
            <person name="Senba T."/>
            <person name="Matsumura K."/>
            <person name="Nakajima Y."/>
            <person name="Mizuno T."/>
            <person name="Morinaga M."/>
            <person name="Sasaki M."/>
            <person name="Togashi T."/>
            <person name="Oyama M."/>
            <person name="Hata H."/>
            <person name="Watanabe M."/>
            <person name="Komatsu T."/>
            <person name="Mizushima-Sugano J."/>
            <person name="Satoh T."/>
            <person name="Shirai Y."/>
            <person name="Takahashi Y."/>
            <person name="Nakagawa K."/>
            <person name="Okumura K."/>
            <person name="Nagase T."/>
            <person name="Nomura N."/>
            <person name="Kikuchi H."/>
            <person name="Masuho Y."/>
            <person name="Yamashita R."/>
            <person name="Nakai K."/>
            <person name="Yada T."/>
            <person name="Nakamura Y."/>
            <person name="Ohara O."/>
            <person name="Isogai T."/>
            <person name="Sugano S."/>
        </authorList>
    </citation>
    <scope>NUCLEOTIDE SEQUENCE [LARGE SCALE MRNA] (ISOFORM 2)</scope>
    <source>
        <tissue>Brain</tissue>
        <tissue>Testis</tissue>
    </source>
</reference>
<reference key="3">
    <citation type="journal article" date="2006" name="Nature">
        <title>Human chromosome 11 DNA sequence and analysis including novel gene identification.</title>
        <authorList>
            <person name="Taylor T.D."/>
            <person name="Noguchi H."/>
            <person name="Totoki Y."/>
            <person name="Toyoda A."/>
            <person name="Kuroki Y."/>
            <person name="Dewar K."/>
            <person name="Lloyd C."/>
            <person name="Itoh T."/>
            <person name="Takeda T."/>
            <person name="Kim D.-W."/>
            <person name="She X."/>
            <person name="Barlow K.F."/>
            <person name="Bloom T."/>
            <person name="Bruford E."/>
            <person name="Chang J.L."/>
            <person name="Cuomo C.A."/>
            <person name="Eichler E."/>
            <person name="FitzGerald M.G."/>
            <person name="Jaffe D.B."/>
            <person name="LaButti K."/>
            <person name="Nicol R."/>
            <person name="Park H.-S."/>
            <person name="Seaman C."/>
            <person name="Sougnez C."/>
            <person name="Yang X."/>
            <person name="Zimmer A.R."/>
            <person name="Zody M.C."/>
            <person name="Birren B.W."/>
            <person name="Nusbaum C."/>
            <person name="Fujiyama A."/>
            <person name="Hattori M."/>
            <person name="Rogers J."/>
            <person name="Lander E.S."/>
            <person name="Sakaki Y."/>
        </authorList>
    </citation>
    <scope>NUCLEOTIDE SEQUENCE [LARGE SCALE GENOMIC DNA]</scope>
</reference>
<reference key="4">
    <citation type="journal article" date="2004" name="Genome Res.">
        <title>The status, quality, and expansion of the NIH full-length cDNA project: the Mammalian Gene Collection (MGC).</title>
        <authorList>
            <consortium name="The MGC Project Team"/>
        </authorList>
    </citation>
    <scope>NUCLEOTIDE SEQUENCE [LARGE SCALE MRNA] (ISOFORM 1)</scope>
    <source>
        <tissue>Testis</tissue>
    </source>
</reference>
<reference key="5">
    <citation type="journal article" date="1998" name="DNA Res.">
        <title>Prediction of the coding sequences of unidentified human genes. X. The complete sequences of 100 new cDNA clones from brain which can code for large proteins in vitro.</title>
        <authorList>
            <person name="Ishikawa K."/>
            <person name="Nagase T."/>
            <person name="Suyama M."/>
            <person name="Miyajima N."/>
            <person name="Tanaka A."/>
            <person name="Kotani H."/>
            <person name="Nomura N."/>
            <person name="Ohara O."/>
        </authorList>
    </citation>
    <scope>NUCLEOTIDE SEQUENCE [LARGE SCALE MRNA] OF 5-593 (ISOFORM 1)</scope>
    <source>
        <tissue>Brain</tissue>
    </source>
</reference>
<reference key="6">
    <citation type="journal article" date="1998" name="Nucleic Acids Res.">
        <title>Characterization of photolyase/blue-light receptor homologs in mouse and human cells.</title>
        <authorList>
            <person name="Kobayashi K."/>
            <person name="Kanno S."/>
            <person name="Smit B."/>
            <person name="van der Horst G.T.J."/>
            <person name="Takao M."/>
            <person name="Yasui A."/>
        </authorList>
    </citation>
    <scope>TISSUE SPECIFICITY</scope>
    <scope>SUBCELLULAR LOCATION</scope>
</reference>
<reference key="7">
    <citation type="journal article" date="1999" name="Science">
        <title>Light-independent role of CRY1 and CRY2 in the mammalian circadian clock.</title>
        <authorList>
            <person name="Griffin E.A. Jr."/>
            <person name="Staknis D."/>
            <person name="Weitz C.J."/>
        </authorList>
    </citation>
    <scope>FUNCTION</scope>
</reference>
<reference key="8">
    <citation type="journal article" date="2002" name="EMBO J.">
        <title>Nucleocytoplasmic shuttling and mCRY-dependent inhibition of ubiquitylation of the mPER2 clock protein.</title>
        <authorList>
            <person name="Yagita K."/>
            <person name="Tamanini F."/>
            <person name="Yasuda M."/>
            <person name="Hoeijmakers J.H."/>
            <person name="van der Horst G.T."/>
            <person name="Okamura H."/>
        </authorList>
    </citation>
    <scope>UBIQUITINATION</scope>
</reference>
<reference key="9">
    <citation type="journal article" date="2004" name="Biochem. Biophys. Res. Commun.">
        <title>A novel autofeedback loop of Dec1 transcription involved in circadian rhythm regulation.</title>
        <authorList>
            <person name="Kawamoto T."/>
            <person name="Noshiro M."/>
            <person name="Sato F."/>
            <person name="Maemura K."/>
            <person name="Takeda N."/>
            <person name="Nagai R."/>
            <person name="Iwata T."/>
            <person name="Fujimoto K."/>
            <person name="Furukawa M."/>
            <person name="Miyazaki K."/>
            <person name="Honma S."/>
            <person name="Honma K.I."/>
            <person name="Kato Y."/>
        </authorList>
    </citation>
    <scope>FUNCTION</scope>
</reference>
<reference key="10">
    <citation type="journal article" date="2006" name="Proc. Natl. Acad. Sci. U.S.A.">
        <title>Posttranslational regulation of the mammalian circadian clock by cryptochrome and protein phosphatase 5.</title>
        <authorList>
            <person name="Partch C.L."/>
            <person name="Shields K.F."/>
            <person name="Thompson C.L."/>
            <person name="Selby C.P."/>
            <person name="Sancar A."/>
        </authorList>
    </citation>
    <scope>FUNCTION</scope>
    <scope>INTERACTION WITH PPP5C</scope>
</reference>
<reference key="11">
    <citation type="journal article" date="2007" name="Science">
        <title>SCFFbxl3 controls the oscillation of the circadian clock by directing the degradation of cryptochrome proteins.</title>
        <authorList>
            <person name="Busino L."/>
            <person name="Bassermann F."/>
            <person name="Maiolica A."/>
            <person name="Lee C."/>
            <person name="Nolan P.M."/>
            <person name="Godinho S.I."/>
            <person name="Draetta G.F."/>
            <person name="Pagano M."/>
        </authorList>
    </citation>
    <scope>IDENTIFICATION BY MASS SPECTROMETRY</scope>
    <scope>UBIQUITINATION BY FBXL3</scope>
    <scope>INTERACTION WITH FBXL3</scope>
</reference>
<reference key="12">
    <citation type="journal article" date="2012" name="Science">
        <title>Identification of small molecule activators of cryptochrome.</title>
        <authorList>
            <person name="Hirota T."/>
            <person name="Lee J.W."/>
            <person name="St John P.C."/>
            <person name="Sawa M."/>
            <person name="Iwaisako K."/>
            <person name="Noguchi T."/>
            <person name="Pongsawakul P.Y."/>
            <person name="Sonntag T."/>
            <person name="Welsh D.K."/>
            <person name="Brenner D.A."/>
            <person name="Doyle F.J. III"/>
            <person name="Schultz P.G."/>
            <person name="Kay S.A."/>
        </authorList>
    </citation>
    <scope>ACTIVITY REGULATION</scope>
    <scope>SUBCELLULAR LOCATION</scope>
    <scope>UBIQUITINATION</scope>
</reference>
<reference key="13">
    <citation type="journal article" date="2013" name="Physiol. Rev.">
        <title>Metabolism and the circadian clock converge.</title>
        <authorList>
            <person name="Eckel-Mahan K."/>
            <person name="Sassone-Corsi P."/>
        </authorList>
    </citation>
    <scope>REVIEW</scope>
</reference>
<reference key="14">
    <citation type="journal article" date="2014" name="Trends Cell Biol.">
        <title>Molecular architecture of the mammalian circadian clock.</title>
        <authorList>
            <person name="Partch C.L."/>
            <person name="Green C.B."/>
            <person name="Takahashi J.S."/>
        </authorList>
    </citation>
    <scope>REVIEW</scope>
</reference>
<reference key="15">
    <citation type="journal article" date="2016" name="Nat. Mater.">
        <title>A magnetic protein biocompass.</title>
        <authorList>
            <person name="Qin S."/>
            <person name="Yin H."/>
            <person name="Yang C."/>
            <person name="Dou Y."/>
            <person name="Liu Z."/>
            <person name="Zhang P."/>
            <person name="Yu H."/>
            <person name="Huang Y."/>
            <person name="Feng J."/>
            <person name="Hao J."/>
            <person name="Hao J."/>
            <person name="Deng L."/>
            <person name="Yan X."/>
            <person name="Dong X."/>
            <person name="Zhao Z."/>
            <person name="Jiang T."/>
            <person name="Wang H.W."/>
            <person name="Luo S.J."/>
            <person name="Xie C."/>
        </authorList>
    </citation>
    <scope>INTERACTION WITH ISCA1</scope>
</reference>
<reference key="16">
    <citation type="journal article" date="2018" name="Proc. Natl. Acad. Sci. U.S.A.">
        <title>Nuclear receptor HNF4A transrepresses CLOCK:BMAL1 and modulates tissue-specific circadian networks.</title>
        <authorList>
            <person name="Qu M."/>
            <person name="Duffy T."/>
            <person name="Hirota T."/>
            <person name="Kay S.A."/>
        </authorList>
    </citation>
    <scope>INTERACTION WITH HNF4A</scope>
</reference>
<reference key="17">
    <citation type="journal article" date="2019" name="Proc. Natl. Acad. Sci. U.S.A.">
        <title>TIMELESS mutation alters phase responsiveness and causes advanced sleep phase.</title>
        <authorList>
            <person name="Kurien P."/>
            <person name="Hsu P.K."/>
            <person name="Leon J."/>
            <person name="Wu D."/>
            <person name="McMahon T."/>
            <person name="Shi G."/>
            <person name="Xu Y."/>
            <person name="Lipzen A."/>
            <person name="Pennacchio L.A."/>
            <person name="Jones C.R."/>
            <person name="Fu Y.H."/>
            <person name="Ptacek L.J."/>
        </authorList>
    </citation>
    <scope>INTERACTION WITH TIMELESS</scope>
</reference>
<evidence type="ECO:0000250" key="1"/>
<evidence type="ECO:0000250" key="2">
    <source>
        <dbReference type="UniProtKB" id="P97784"/>
    </source>
</evidence>
<evidence type="ECO:0000250" key="3">
    <source>
        <dbReference type="UniProtKB" id="Q9R194"/>
    </source>
</evidence>
<evidence type="ECO:0000256" key="4">
    <source>
        <dbReference type="SAM" id="MobiDB-lite"/>
    </source>
</evidence>
<evidence type="ECO:0000269" key="5">
    <source>
    </source>
</evidence>
<evidence type="ECO:0000269" key="6">
    <source>
    </source>
</evidence>
<evidence type="ECO:0000269" key="7">
    <source>
    </source>
</evidence>
<evidence type="ECO:0000269" key="8">
    <source>
    </source>
</evidence>
<evidence type="ECO:0000269" key="9">
    <source>
    </source>
</evidence>
<evidence type="ECO:0000269" key="10">
    <source>
    </source>
</evidence>
<evidence type="ECO:0000269" key="11">
    <source>
    </source>
</evidence>
<evidence type="ECO:0000269" key="12">
    <source>
    </source>
</evidence>
<evidence type="ECO:0000269" key="13">
    <source>
    </source>
</evidence>
<evidence type="ECO:0000269" key="14">
    <source>
    </source>
</evidence>
<evidence type="ECO:0000269" key="15">
    <source>
    </source>
</evidence>
<evidence type="ECO:0000303" key="16">
    <source>
    </source>
</evidence>
<evidence type="ECO:0000305" key="17"/>
<feature type="chain" id="PRO_0000261148" description="Cryptochrome-2">
    <location>
        <begin position="1"/>
        <end position="593"/>
    </location>
</feature>
<feature type="domain" description="Photolyase/cryptochrome alpha/beta">
    <location>
        <begin position="22"/>
        <end position="151"/>
    </location>
</feature>
<feature type="region of interest" description="Required for inhibition of CLOCK-BMAL1-mediated transcription" evidence="3">
    <location>
        <begin position="390"/>
        <end position="489"/>
    </location>
</feature>
<feature type="region of interest" description="Disordered" evidence="4">
    <location>
        <begin position="532"/>
        <end position="593"/>
    </location>
</feature>
<feature type="compositionally biased region" description="Low complexity" evidence="4">
    <location>
        <begin position="537"/>
        <end position="548"/>
    </location>
</feature>
<feature type="binding site" evidence="3">
    <location>
        <position position="271"/>
    </location>
    <ligand>
        <name>FAD</name>
        <dbReference type="ChEBI" id="CHEBI:57692"/>
    </ligand>
</feature>
<feature type="binding site" evidence="2">
    <location>
        <position position="308"/>
    </location>
    <ligand>
        <name>FAD</name>
        <dbReference type="ChEBI" id="CHEBI:57692"/>
    </ligand>
</feature>
<feature type="binding site" evidence="3">
    <location>
        <position position="374"/>
    </location>
    <ligand>
        <name>FAD</name>
        <dbReference type="ChEBI" id="CHEBI:57692"/>
    </ligand>
</feature>
<feature type="binding site" evidence="3">
    <location>
        <begin position="406"/>
        <end position="408"/>
    </location>
    <ligand>
        <name>FAD</name>
        <dbReference type="ChEBI" id="CHEBI:57692"/>
    </ligand>
</feature>
<feature type="modified residue" description="Phosphoserine" evidence="2">
    <location>
        <position position="90"/>
    </location>
</feature>
<feature type="modified residue" description="Phosphoserine; by MAPK" evidence="3">
    <location>
        <position position="266"/>
    </location>
</feature>
<feature type="modified residue" description="Phosphoserine" evidence="2">
    <location>
        <position position="299"/>
    </location>
</feature>
<feature type="modified residue" description="Phosphoserine; by GSK3-beta" evidence="3">
    <location>
        <position position="554"/>
    </location>
</feature>
<feature type="modified residue" description="Phosphoserine; by DYRK1A and MAPK" evidence="3">
    <location>
        <position position="558"/>
    </location>
</feature>
<feature type="cross-link" description="Glycyl lysine isopeptide (Lys-Gly) (interchain with G-Cter in ubiquitin)" evidence="2">
    <location>
        <position position="30"/>
    </location>
</feature>
<feature type="cross-link" description="Glycyl lysine isopeptide (Lys-Gly) (interchain with G-Cter in ubiquitin)" evidence="3">
    <location>
        <position position="126"/>
    </location>
</feature>
<feature type="cross-link" description="Glycyl lysine isopeptide (Lys-Gly) (interchain with G-Cter in ubiquitin)" evidence="3">
    <location>
        <position position="242"/>
    </location>
</feature>
<feature type="cross-link" description="Glycyl lysine isopeptide (Lys-Gly) (interchain with G-Cter in ubiquitin)" evidence="3">
    <location>
        <position position="348"/>
    </location>
</feature>
<feature type="cross-link" description="Glycyl lysine isopeptide (Lys-Gly) (interchain with G-Cter in ubiquitin)" evidence="3">
    <location>
        <position position="475"/>
    </location>
</feature>
<feature type="cross-link" description="Glycyl lysine isopeptide (Lys-Gly) (interchain with G-Cter in ubiquitin)" evidence="3">
    <location>
        <position position="504"/>
    </location>
</feature>
<feature type="splice variant" id="VSP_038970" description="In isoform 2." evidence="16">
    <original>MAATVATAAAVAPAPAPGTDSASSVHWFRKGLRLHDNPALLAAVRGARCVRCVYILDPWFAASSSVGINRWR</original>
    <variation>MPAPPGRTHTW</variation>
    <location>
        <begin position="1"/>
        <end position="72"/>
    </location>
</feature>
<feature type="sequence conflict" description="In Ref. 4; AAH35161." evidence="17" ref="4">
    <original>S</original>
    <variation>G</variation>
    <location>
        <position position="422"/>
    </location>
</feature>
<feature type="sequence conflict" description="In Ref. 2; BAG57993." evidence="17" ref="2">
    <original>H</original>
    <variation>L</variation>
    <location sequence="Q49AN0-2">
        <position position="9"/>
    </location>
</feature>
<gene>
    <name type="primary">CRY2</name>
    <name type="synonym">KIAA0658</name>
</gene>
<organism>
    <name type="scientific">Homo sapiens</name>
    <name type="common">Human</name>
    <dbReference type="NCBI Taxonomy" id="9606"/>
    <lineage>
        <taxon>Eukaryota</taxon>
        <taxon>Metazoa</taxon>
        <taxon>Chordata</taxon>
        <taxon>Craniata</taxon>
        <taxon>Vertebrata</taxon>
        <taxon>Euteleostomi</taxon>
        <taxon>Mammalia</taxon>
        <taxon>Eutheria</taxon>
        <taxon>Euarchontoglires</taxon>
        <taxon>Primates</taxon>
        <taxon>Haplorrhini</taxon>
        <taxon>Catarrhini</taxon>
        <taxon>Hominidae</taxon>
        <taxon>Homo</taxon>
    </lineage>
</organism>
<dbReference type="EMBL" id="AK294904">
    <property type="protein sequence ID" value="BAG57993.1"/>
    <property type="status" value="ALT_SEQ"/>
    <property type="molecule type" value="mRNA"/>
</dbReference>
<dbReference type="EMBL" id="AK302865">
    <property type="protein sequence ID" value="BAG64048.1"/>
    <property type="status" value="ALT_INIT"/>
    <property type="molecule type" value="mRNA"/>
</dbReference>
<dbReference type="EMBL" id="AC068385">
    <property type="status" value="NOT_ANNOTATED_CDS"/>
    <property type="molecule type" value="Genomic_DNA"/>
</dbReference>
<dbReference type="EMBL" id="KF455380">
    <property type="status" value="NOT_ANNOTATED_CDS"/>
    <property type="molecule type" value="Genomic_DNA"/>
</dbReference>
<dbReference type="EMBL" id="BC035161">
    <property type="protein sequence ID" value="AAH35161.1"/>
    <property type="status" value="ALT_SEQ"/>
    <property type="molecule type" value="mRNA"/>
</dbReference>
<dbReference type="EMBL" id="BC041814">
    <property type="protein sequence ID" value="AAH41814.1"/>
    <property type="molecule type" value="mRNA"/>
</dbReference>
<dbReference type="EMBL" id="AB014558">
    <property type="protein sequence ID" value="BAA31633.1"/>
    <property type="molecule type" value="mRNA"/>
</dbReference>
<dbReference type="CCDS" id="CCDS44576.1">
    <molecule id="Q49AN0-2"/>
</dbReference>
<dbReference type="CCDS" id="CCDS7915.3">
    <molecule id="Q49AN0-1"/>
</dbReference>
<dbReference type="RefSeq" id="NP_001120929.1">
    <molecule id="Q49AN0-2"/>
    <property type="nucleotide sequence ID" value="NM_001127457.3"/>
</dbReference>
<dbReference type="RefSeq" id="NP_066940.3">
    <molecule id="Q49AN0-1"/>
    <property type="nucleotide sequence ID" value="NM_021117.5"/>
</dbReference>
<dbReference type="SMR" id="Q49AN0"/>
<dbReference type="BioGRID" id="107798">
    <property type="interactions" value="199"/>
</dbReference>
<dbReference type="ComplexPortal" id="CPX-3220">
    <property type="entry name" value="CRY2-PER2 complex"/>
</dbReference>
<dbReference type="ComplexPortal" id="CPX-3221">
    <property type="entry name" value="Cry2-Per1 complex"/>
</dbReference>
<dbReference type="ComplexPortal" id="CPX-3224">
    <property type="entry name" value="Cry2-Per3 complex"/>
</dbReference>
<dbReference type="CORUM" id="Q49AN0"/>
<dbReference type="DIP" id="DIP-47396N"/>
<dbReference type="FunCoup" id="Q49AN0">
    <property type="interactions" value="1026"/>
</dbReference>
<dbReference type="IntAct" id="Q49AN0">
    <property type="interactions" value="55"/>
</dbReference>
<dbReference type="MINT" id="Q49AN0"/>
<dbReference type="STRING" id="9606.ENSP00000478187"/>
<dbReference type="BindingDB" id="Q49AN0"/>
<dbReference type="ChEMBL" id="CHEMBL4296116"/>
<dbReference type="iPTMnet" id="Q49AN0"/>
<dbReference type="PhosphoSitePlus" id="Q49AN0"/>
<dbReference type="BioMuta" id="CRY2"/>
<dbReference type="DMDM" id="118572252"/>
<dbReference type="jPOST" id="Q49AN0"/>
<dbReference type="MassIVE" id="Q49AN0"/>
<dbReference type="PaxDb" id="9606-ENSP00000478187"/>
<dbReference type="PeptideAtlas" id="Q49AN0"/>
<dbReference type="ProteomicsDB" id="62059">
    <molecule id="Q49AN0-1"/>
</dbReference>
<dbReference type="ProteomicsDB" id="62060">
    <molecule id="Q49AN0-2"/>
</dbReference>
<dbReference type="Pumba" id="Q49AN0"/>
<dbReference type="Antibodypedia" id="26186">
    <property type="antibodies" value="255 antibodies from 34 providers"/>
</dbReference>
<dbReference type="DNASU" id="1408"/>
<dbReference type="Ensembl" id="ENST00000417225.6">
    <molecule id="Q49AN0-2"/>
    <property type="protein sequence ID" value="ENSP00000397419.2"/>
    <property type="gene ID" value="ENSG00000121671.12"/>
</dbReference>
<dbReference type="Ensembl" id="ENST00000616080.2">
    <molecule id="Q49AN0-1"/>
    <property type="protein sequence ID" value="ENSP00000484684.1"/>
    <property type="gene ID" value="ENSG00000121671.12"/>
</dbReference>
<dbReference type="GeneID" id="1408"/>
<dbReference type="KEGG" id="hsa:1408"/>
<dbReference type="MANE-Select" id="ENST00000616080.2">
    <property type="protein sequence ID" value="ENSP00000484684.1"/>
    <property type="RefSeq nucleotide sequence ID" value="NM_021117.5"/>
    <property type="RefSeq protein sequence ID" value="NP_066940.3"/>
</dbReference>
<dbReference type="UCSC" id="uc009ykw.4">
    <molecule id="Q49AN0-1"/>
    <property type="organism name" value="human"/>
</dbReference>
<dbReference type="AGR" id="HGNC:2385"/>
<dbReference type="CTD" id="1408"/>
<dbReference type="DisGeNET" id="1408"/>
<dbReference type="GeneCards" id="CRY2"/>
<dbReference type="HGNC" id="HGNC:2385">
    <property type="gene designation" value="CRY2"/>
</dbReference>
<dbReference type="HPA" id="ENSG00000121671">
    <property type="expression patterns" value="Low tissue specificity"/>
</dbReference>
<dbReference type="MIM" id="603732">
    <property type="type" value="gene"/>
</dbReference>
<dbReference type="neXtProt" id="NX_Q49AN0"/>
<dbReference type="OpenTargets" id="ENSG00000121671"/>
<dbReference type="PharmGKB" id="PA26905"/>
<dbReference type="VEuPathDB" id="HostDB:ENSG00000121671"/>
<dbReference type="eggNOG" id="KOG0133">
    <property type="taxonomic scope" value="Eukaryota"/>
</dbReference>
<dbReference type="GeneTree" id="ENSGT00940000159073"/>
<dbReference type="HOGENOM" id="CLU_010348_3_4_1"/>
<dbReference type="InParanoid" id="Q49AN0"/>
<dbReference type="OrthoDB" id="435881at2759"/>
<dbReference type="PAN-GO" id="Q49AN0">
    <property type="GO annotations" value="7 GO annotations based on evolutionary models"/>
</dbReference>
<dbReference type="PhylomeDB" id="Q49AN0"/>
<dbReference type="TreeFam" id="TF323191"/>
<dbReference type="PathwayCommons" id="Q49AN0"/>
<dbReference type="Reactome" id="R-HSA-400253">
    <property type="pathway name" value="Circadian Clock"/>
</dbReference>
<dbReference type="SABIO-RK" id="Q49AN0"/>
<dbReference type="SignaLink" id="Q49AN0"/>
<dbReference type="SIGNOR" id="Q49AN0"/>
<dbReference type="BioGRID-ORCS" id="1408">
    <property type="hits" value="15 hits in 1163 CRISPR screens"/>
</dbReference>
<dbReference type="ChiTaRS" id="CRY2">
    <property type="organism name" value="human"/>
</dbReference>
<dbReference type="GenomeRNAi" id="1408"/>
<dbReference type="Pharos" id="Q49AN0">
    <property type="development level" value="Tbio"/>
</dbReference>
<dbReference type="PRO" id="PR:Q49AN0"/>
<dbReference type="Proteomes" id="UP000005640">
    <property type="component" value="Chromosome 11"/>
</dbReference>
<dbReference type="RNAct" id="Q49AN0">
    <property type="molecule type" value="protein"/>
</dbReference>
<dbReference type="Bgee" id="ENSG00000121671">
    <property type="expression patterns" value="Expressed in hindlimb stylopod muscle and 188 other cell types or tissues"/>
</dbReference>
<dbReference type="ExpressionAtlas" id="Q49AN0">
    <property type="expression patterns" value="baseline and differential"/>
</dbReference>
<dbReference type="GO" id="GO:1990512">
    <property type="term" value="C:Cry-Per complex"/>
    <property type="evidence" value="ECO:0000266"/>
    <property type="project" value="ComplexPortal"/>
</dbReference>
<dbReference type="GO" id="GO:0005737">
    <property type="term" value="C:cytoplasm"/>
    <property type="evidence" value="ECO:0000318"/>
    <property type="project" value="GO_Central"/>
</dbReference>
<dbReference type="GO" id="GO:0005829">
    <property type="term" value="C:cytosol"/>
    <property type="evidence" value="ECO:0000314"/>
    <property type="project" value="HPA"/>
</dbReference>
<dbReference type="GO" id="GO:0005576">
    <property type="term" value="C:extracellular region"/>
    <property type="evidence" value="ECO:0000314"/>
    <property type="project" value="MGI"/>
</dbReference>
<dbReference type="GO" id="GO:0005739">
    <property type="term" value="C:mitochondrion"/>
    <property type="evidence" value="ECO:0007669"/>
    <property type="project" value="Ensembl"/>
</dbReference>
<dbReference type="GO" id="GO:0016607">
    <property type="term" value="C:nuclear speck"/>
    <property type="evidence" value="ECO:0000314"/>
    <property type="project" value="HPA"/>
</dbReference>
<dbReference type="GO" id="GO:0005634">
    <property type="term" value="C:nucleus"/>
    <property type="evidence" value="ECO:0000250"/>
    <property type="project" value="UniProtKB"/>
</dbReference>
<dbReference type="GO" id="GO:0009882">
    <property type="term" value="F:blue light photoreceptor activity"/>
    <property type="evidence" value="ECO:0000303"/>
    <property type="project" value="UniProtKB"/>
</dbReference>
<dbReference type="GO" id="GO:0003684">
    <property type="term" value="F:damaged DNA binding"/>
    <property type="evidence" value="ECO:0000314"/>
    <property type="project" value="UniProtKB"/>
</dbReference>
<dbReference type="GO" id="GO:0003677">
    <property type="term" value="F:DNA binding"/>
    <property type="evidence" value="ECO:0000314"/>
    <property type="project" value="UniProtKB"/>
</dbReference>
<dbReference type="GO" id="GO:0071949">
    <property type="term" value="F:FAD binding"/>
    <property type="evidence" value="ECO:0000250"/>
    <property type="project" value="UniProtKB"/>
</dbReference>
<dbReference type="GO" id="GO:0016922">
    <property type="term" value="F:nuclear receptor binding"/>
    <property type="evidence" value="ECO:0007669"/>
    <property type="project" value="Ensembl"/>
</dbReference>
<dbReference type="GO" id="GO:0019902">
    <property type="term" value="F:phosphatase binding"/>
    <property type="evidence" value="ECO:0000353"/>
    <property type="project" value="UniProtKB"/>
</dbReference>
<dbReference type="GO" id="GO:0019901">
    <property type="term" value="F:protein kinase binding"/>
    <property type="evidence" value="ECO:0007669"/>
    <property type="project" value="Ensembl"/>
</dbReference>
<dbReference type="GO" id="GO:0004864">
    <property type="term" value="F:protein phosphatase inhibitor activity"/>
    <property type="evidence" value="ECO:0000314"/>
    <property type="project" value="UniProtKB"/>
</dbReference>
<dbReference type="GO" id="GO:0003697">
    <property type="term" value="F:single-stranded DNA binding"/>
    <property type="evidence" value="ECO:0000314"/>
    <property type="project" value="UniProtKB"/>
</dbReference>
<dbReference type="GO" id="GO:0000976">
    <property type="term" value="F:transcription cis-regulatory region binding"/>
    <property type="evidence" value="ECO:0000250"/>
    <property type="project" value="UniProtKB"/>
</dbReference>
<dbReference type="GO" id="GO:0009785">
    <property type="term" value="P:blue light signaling pathway"/>
    <property type="evidence" value="ECO:0000303"/>
    <property type="project" value="UniProtKB"/>
</dbReference>
<dbReference type="GO" id="GO:0032922">
    <property type="term" value="P:circadian regulation of gene expression"/>
    <property type="evidence" value="ECO:0000250"/>
    <property type="project" value="UniProtKB"/>
</dbReference>
<dbReference type="GO" id="GO:0007623">
    <property type="term" value="P:circadian rhythm"/>
    <property type="evidence" value="ECO:0000250"/>
    <property type="project" value="UniProtKB"/>
</dbReference>
<dbReference type="GO" id="GO:0043153">
    <property type="term" value="P:entrainment of circadian clock by photoperiod"/>
    <property type="evidence" value="ECO:0000250"/>
    <property type="project" value="UniProtKB"/>
</dbReference>
<dbReference type="GO" id="GO:0042593">
    <property type="term" value="P:glucose homeostasis"/>
    <property type="evidence" value="ECO:0000250"/>
    <property type="project" value="UniProtKB"/>
</dbReference>
<dbReference type="GO" id="GO:0019915">
    <property type="term" value="P:lipid storage"/>
    <property type="evidence" value="ECO:0007669"/>
    <property type="project" value="Ensembl"/>
</dbReference>
<dbReference type="GO" id="GO:0042754">
    <property type="term" value="P:negative regulation of circadian rhythm"/>
    <property type="evidence" value="ECO:0000250"/>
    <property type="project" value="UniProtKB"/>
</dbReference>
<dbReference type="GO" id="GO:0045892">
    <property type="term" value="P:negative regulation of DNA-templated transcription"/>
    <property type="evidence" value="ECO:0000314"/>
    <property type="project" value="UniProtKB"/>
</dbReference>
<dbReference type="GO" id="GO:2000850">
    <property type="term" value="P:negative regulation of glucocorticoid secretion"/>
    <property type="evidence" value="ECO:0007669"/>
    <property type="project" value="Ensembl"/>
</dbReference>
<dbReference type="GO" id="GO:2000323">
    <property type="term" value="P:negative regulation of nuclear receptor-mediated glucocorticoid signaling pathway"/>
    <property type="evidence" value="ECO:0000250"/>
    <property type="project" value="UniProtKB"/>
</dbReference>
<dbReference type="GO" id="GO:0000122">
    <property type="term" value="P:negative regulation of transcription by RNA polymerase II"/>
    <property type="evidence" value="ECO:0000314"/>
    <property type="project" value="BHF-UCL"/>
</dbReference>
<dbReference type="GO" id="GO:0006606">
    <property type="term" value="P:protein import into nucleus"/>
    <property type="evidence" value="ECO:0007669"/>
    <property type="project" value="Ensembl"/>
</dbReference>
<dbReference type="GO" id="GO:0042752">
    <property type="term" value="P:regulation of circadian rhythm"/>
    <property type="evidence" value="ECO:0000250"/>
    <property type="project" value="UniProtKB"/>
</dbReference>
<dbReference type="GO" id="GO:2000118">
    <property type="term" value="P:regulation of sodium-dependent phosphate transport"/>
    <property type="evidence" value="ECO:0000314"/>
    <property type="project" value="MGI"/>
</dbReference>
<dbReference type="GO" id="GO:0014823">
    <property type="term" value="P:response to activity"/>
    <property type="evidence" value="ECO:0000250"/>
    <property type="project" value="UniProtKB"/>
</dbReference>
<dbReference type="GO" id="GO:0032868">
    <property type="term" value="P:response to insulin"/>
    <property type="evidence" value="ECO:0007669"/>
    <property type="project" value="Ensembl"/>
</dbReference>
<dbReference type="GO" id="GO:0009416">
    <property type="term" value="P:response to light stimulus"/>
    <property type="evidence" value="ECO:0000315"/>
    <property type="project" value="CAFA"/>
</dbReference>
<dbReference type="DisProt" id="DP00473"/>
<dbReference type="FunFam" id="1.10.579.10:FF:000001">
    <property type="entry name" value="Cryptochrome 1"/>
    <property type="match status" value="1"/>
</dbReference>
<dbReference type="FunFam" id="1.25.40.80:FF:000001">
    <property type="entry name" value="Cryptochrome circadian regulator 2"/>
    <property type="match status" value="1"/>
</dbReference>
<dbReference type="FunFam" id="1.25.40.80:FF:000003">
    <property type="entry name" value="cryptochrome-1 isoform X1"/>
    <property type="match status" value="1"/>
</dbReference>
<dbReference type="Gene3D" id="1.25.40.80">
    <property type="match status" value="1"/>
</dbReference>
<dbReference type="Gene3D" id="1.10.579.10">
    <property type="entry name" value="DNA Cyclobutane Dipyrimidine Photolyase, subunit A, domain 3"/>
    <property type="match status" value="1"/>
</dbReference>
<dbReference type="Gene3D" id="3.40.50.620">
    <property type="entry name" value="HUPs"/>
    <property type="match status" value="1"/>
</dbReference>
<dbReference type="InterPro" id="IPR036134">
    <property type="entry name" value="Crypto/Photolyase_FAD-like_sf"/>
</dbReference>
<dbReference type="InterPro" id="IPR036155">
    <property type="entry name" value="Crypto/Photolyase_N_sf"/>
</dbReference>
<dbReference type="InterPro" id="IPR005101">
    <property type="entry name" value="Cryptochr/Photolyase_FAD-bd"/>
</dbReference>
<dbReference type="InterPro" id="IPR002081">
    <property type="entry name" value="Cryptochrome/DNA_photolyase_1"/>
</dbReference>
<dbReference type="InterPro" id="IPR006050">
    <property type="entry name" value="DNA_photolyase_N"/>
</dbReference>
<dbReference type="InterPro" id="IPR014729">
    <property type="entry name" value="Rossmann-like_a/b/a_fold"/>
</dbReference>
<dbReference type="PANTHER" id="PTHR11455">
    <property type="entry name" value="CRYPTOCHROME"/>
    <property type="match status" value="1"/>
</dbReference>
<dbReference type="PANTHER" id="PTHR11455:SF15">
    <property type="entry name" value="CRYPTOCHROME-2"/>
    <property type="match status" value="1"/>
</dbReference>
<dbReference type="Pfam" id="PF00875">
    <property type="entry name" value="DNA_photolyase"/>
    <property type="match status" value="1"/>
</dbReference>
<dbReference type="Pfam" id="PF03441">
    <property type="entry name" value="FAD_binding_7"/>
    <property type="match status" value="1"/>
</dbReference>
<dbReference type="SUPFAM" id="SSF48173">
    <property type="entry name" value="Cryptochrome/photolyase FAD-binding domain"/>
    <property type="match status" value="1"/>
</dbReference>
<dbReference type="SUPFAM" id="SSF52425">
    <property type="entry name" value="Cryptochrome/photolyase, N-terminal domain"/>
    <property type="match status" value="1"/>
</dbReference>
<dbReference type="PROSITE" id="PS51645">
    <property type="entry name" value="PHR_CRY_ALPHA_BETA"/>
    <property type="match status" value="1"/>
</dbReference>
<comment type="function">
    <text evidence="3 5 7 8">Transcriptional repressor which forms a core component of the circadian clock. The circadian clock, an internal time-keeping system, regulates various physiological processes through the generation of approximately 24 hour circadian rhythms in gene expression, which are translated into rhythms in metabolism and behavior. It is derived from the Latin roots 'circa' (about) and 'diem' (day) and acts as an important regulator of a wide array of physiological functions including metabolism, sleep, body temperature, blood pressure, endocrine, immune, cardiovascular, and renal function. Consists of two major components: the central clock, residing in the suprachiasmatic nucleus (SCN) of the brain, and the peripheral clocks that are present in nearly every tissue and organ system. Both the central and peripheral clocks can be reset by environmental cues, also known as Zeitgebers (German for 'timegivers'). The predominant Zeitgeber for the central clock is light, which is sensed by retina and signals directly to the SCN. The central clock entrains the peripheral clocks through neuronal and hormonal signals, body temperature and feeding-related cues, aligning all clocks with the external light/dark cycle. Circadian rhythms allow an organism to achieve temporal homeostasis with its environment at the molecular level by regulating gene expression to create a peak of protein expression once every 24 hours to control when a particular physiological process is most active with respect to the solar day. Transcription and translation of core clock components (CLOCK, NPAS2, BMAL1, BMAL2, PER1, PER2, PER3, CRY1 and CRY2) plays a critical role in rhythm generation, whereas delays imposed by post-translational modifications (PTMs) are important for determining the period (tau) of the rhythms (tau refers to the period of a rhythm and is the length, in time, of one complete cycle). A diurnal rhythm is synchronized with the day/night cycle, while the ultradian and infradian rhythms have a period shorter and longer than 24 hours, respectively. Disruptions in the circadian rhythms contribute to the pathology of cardiovascular diseases, cancer, metabolic syndromes and aging. A transcription/translation feedback loop (TTFL) forms the core of the molecular circadian clock mechanism. Transcription factors, CLOCK or NPAS2 and BMAL1 or BMAL2, form the positive limb of the feedback loop, act in the form of a heterodimer and activate the transcription of core clock genes and clock-controlled genes (involved in key metabolic processes), harboring E-box elements (5'-CACGTG-3') within their promoters. The core clock genes: PER1/2/3 and CRY1/2 which are transcriptional repressors form the negative limb of the feedback loop and interact with the CLOCK|NPAS2-BMAL1|BMAL2 heterodimer inhibiting its activity and thereby negatively regulating their own expression. This heterodimer also activates nuclear receptors NR1D1/2 and RORA/B/G, which form a second feedback loop and which activate and repress BMAL1 transcription, respectively. CRY1 and CRY2 have redundant functions but also differential and selective contributions at least in defining the pace of the SCN circadian clock and its circadian transcriptional outputs. Less potent transcriptional repressor in cerebellum and liver than CRY1, though less effective in lengthening the period of the SCN oscillator. Seems to play a critical role in tuning SCN circadian period by opposing the action of CRY1. With CRY1, dispensable for circadian rhythm generation but necessary for the development of intercellular networks for rhythm synchrony. May mediate circadian regulation of cAMP signaling and gluconeogenesis by blocking glucagon-mediated increases in intracellular cAMP concentrations and in CREB1 phosphorylation. Besides its role in the maintenance of the circadian clock, is also involved in the regulation of other processes. Plays a key role in glucose and lipid metabolism modulation, in part, through the transcriptional regulation of genes involved in these pathways, such as LEP or ACSL4. Represses glucocorticoid receptor NR3C1/GR-induced transcriptional activity by binding to glucocorticoid response elements (GREs). Represses the CLOCK-BMAL1 induced transcription of BHLHE40/DEC1. Represses the CLOCK-BMAL1 induced transcription of NAMPT (By similarity). Represses PPARD and its target genes in the skeletal muscle and limits exercise capacity (By similarity). Represses the transcriptional activity of NR1I2 (By similarity).</text>
</comment>
<comment type="cofactor">
    <cofactor evidence="3">
        <name>FAD</name>
        <dbReference type="ChEBI" id="CHEBI:57692"/>
    </cofactor>
    <text evidence="3">Binds 1 FAD per subunit. Only a minority of the protein molecules contain bound FAD. Contrary to the situation in photolyases, the FAD is bound in a shallow, surface-exposed pocket.</text>
</comment>
<comment type="cofactor">
    <cofactor evidence="1">
        <name>(6R)-5,10-methylene-5,6,7,8-tetrahydrofolate</name>
        <dbReference type="ChEBI" id="CHEBI:15636"/>
    </cofactor>
    <text evidence="1">Binds 1 5,10-methenyltetrahydrofolate (MTHF) non-covalently per subunit.</text>
</comment>
<comment type="activity regulation">
    <text evidence="10">KL001 (N-[3-(9H-carbazol-9-yl)-2-hydroxypropyl]-N-(2-furanylmethyl)-methanesulfonamide) binds to CRY1 and stabilizes it by inhibiting FBXL3- and ubiquitin-dependent degradation of CRY1 resulting in lengthening of the circadian periods.</text>
</comment>
<comment type="subunit">
    <text evidence="3 8 9 11 12 13">Component of the circadian core oscillator, which includes the CRY proteins, CLOCK or NPAS2, BMAL1 or BMAL2, CSNK1D and/or CSNK1E, TIMELESS, and the PER proteins (By similarity). Interacts with TIMELESS (PubMed:31138685). Interacts directly with PER1, PER2 and PER3; interaction with PER2 inhibits its ubiquitination and vice versa (By similarity). Interacts with CLOCK-BMAL1 (By similarity). Interacts with CLOCK (By similarity). Interacts with BMAL1 (By similarity). Interacts with NFIL3 (By similarity). Interacts with FBXL3 (PubMed:17463251). Interacts with FBXL21 (By similarity). FBXL3, PER2 and the cofactor FAD compete for overlapping binding sites (By similarity). FBXL3 cannot bind CRY2 that interacts already with PER2 or that contains bound FAD (By similarity). Interacts with PPP5C (via TPR repeats); the interaction down-regulates the PPP5C phosphatase activity on CSNK1E (PubMed:16790549). Interacts with nuclear receptors AR and NR3C1/GR; the interaction is ligand dependent (By similarity). Interacts with PRKDC and CIART (By similarity). Interacts with ISCA1 (in vitro) (PubMed:26569474). Interacts with DDB1, USP7 and TARDBP (By similarity). Interacts with HNF4A (PubMed:30530698). Interacts with PPARA (By similarity). Interacts with PPARD (via domain NR LBD) and NR1I2 (via domain NR LBD) in a ligand-dependent manner (By similarity). Interacts with PPARG, NR1I3 and VDR in a ligand-dependent manner (By similarity).</text>
</comment>
<comment type="interaction">
    <interactant intactId="EBI-2212355">
        <id>Q49AN0</id>
    </interactant>
    <interactant intactId="EBI-10171858">
        <id>Q13363-2</id>
        <label>CTBP1</label>
    </interactant>
    <organismsDiffer>false</organismsDiffer>
    <experiments>3</experiments>
</comment>
<comment type="interaction">
    <interactant intactId="EBI-2212355">
        <id>Q49AN0</id>
    </interactant>
    <interactant intactId="EBI-3867333">
        <id>A8MQ03</id>
        <label>CYSRT1</label>
    </interactant>
    <organismsDiffer>false</organismsDiffer>
    <experiments>3</experiments>
</comment>
<comment type="interaction">
    <interactant intactId="EBI-2212355">
        <id>Q49AN0</id>
    </interactant>
    <interactant intactId="EBI-747754">
        <id>P28799</id>
        <label>GRN</label>
    </interactant>
    <organismsDiffer>false</organismsDiffer>
    <experiments>3</experiments>
</comment>
<comment type="interaction">
    <interactant intactId="EBI-2212355">
        <id>Q49AN0</id>
    </interactant>
    <interactant intactId="EBI-6426464">
        <id>Q8WZ60</id>
        <label>KLHL6</label>
    </interactant>
    <organismsDiffer>false</organismsDiffer>
    <experiments>5</experiments>
</comment>
<comment type="interaction">
    <interactant intactId="EBI-2212355">
        <id>Q49AN0</id>
    </interactant>
    <interactant intactId="EBI-10171697">
        <id>Q6A162</id>
        <label>KRT40</label>
    </interactant>
    <organismsDiffer>false</organismsDiffer>
    <experiments>3</experiments>
</comment>
<comment type="interaction">
    <interactant intactId="EBI-2212355">
        <id>Q49AN0</id>
    </interactant>
    <interactant intactId="EBI-11959885">
        <id>Q07627</id>
        <label>KRTAP1-1</label>
    </interactant>
    <organismsDiffer>false</organismsDiffer>
    <experiments>3</experiments>
</comment>
<comment type="interaction">
    <interactant intactId="EBI-2212355">
        <id>Q49AN0</id>
    </interactant>
    <interactant intactId="EBI-11749135">
        <id>Q8IUG1</id>
        <label>KRTAP1-3</label>
    </interactant>
    <organismsDiffer>false</organismsDiffer>
    <experiments>3</experiments>
</comment>
<comment type="interaction">
    <interactant intactId="EBI-2212355">
        <id>Q49AN0</id>
    </interactant>
    <interactant intactId="EBI-10172290">
        <id>P60409</id>
        <label>KRTAP10-7</label>
    </interactant>
    <organismsDiffer>false</organismsDiffer>
    <experiments>3</experiments>
</comment>
<comment type="interaction">
    <interactant intactId="EBI-2212355">
        <id>Q49AN0</id>
    </interactant>
    <interactant intactId="EBI-10171774">
        <id>P60410</id>
        <label>KRTAP10-8</label>
    </interactant>
    <organismsDiffer>false</organismsDiffer>
    <experiments>3</experiments>
</comment>
<comment type="interaction">
    <interactant intactId="EBI-2212355">
        <id>Q49AN0</id>
    </interactant>
    <interactant intactId="EBI-12805508">
        <id>Q3LI70</id>
        <label>KRTAP19-6</label>
    </interactant>
    <organismsDiffer>false</organismsDiffer>
    <experiments>3</experiments>
</comment>
<comment type="interaction">
    <interactant intactId="EBI-2212355">
        <id>Q49AN0</id>
    </interactant>
    <interactant intactId="EBI-10172511">
        <id>Q9BYR5</id>
        <label>KRTAP4-2</label>
    </interactant>
    <organismsDiffer>false</organismsDiffer>
    <experiments>3</experiments>
</comment>
<comment type="interaction">
    <interactant intactId="EBI-2212355">
        <id>Q49AN0</id>
    </interactant>
    <interactant intactId="EBI-12074540">
        <id>Q6L8H4</id>
        <label>KRTAP5-1</label>
    </interactant>
    <organismsDiffer>false</organismsDiffer>
    <experiments>3</experiments>
</comment>
<comment type="interaction">
    <interactant intactId="EBI-2212355">
        <id>Q49AN0</id>
    </interactant>
    <interactant intactId="EBI-11958178">
        <id>Q701N4</id>
        <label>KRTAP5-2</label>
    </interactant>
    <organismsDiffer>false</organismsDiffer>
    <experiments>3</experiments>
</comment>
<comment type="interaction">
    <interactant intactId="EBI-2212355">
        <id>Q49AN0</id>
    </interactant>
    <interactant intactId="EBI-11963072">
        <id>Q6L8H1</id>
        <label>KRTAP5-4</label>
    </interactant>
    <organismsDiffer>false</organismsDiffer>
    <experiments>3</experiments>
</comment>
<comment type="interaction">
    <interactant intactId="EBI-2212355">
        <id>Q49AN0</id>
    </interactant>
    <interactant intactId="EBI-11987425">
        <id>Q6L8G8</id>
        <label>KRTAP5-7</label>
    </interactant>
    <organismsDiffer>false</organismsDiffer>
    <experiments>3</experiments>
</comment>
<comment type="interaction">
    <interactant intactId="EBI-2212355">
        <id>Q49AN0</id>
    </interactant>
    <interactant intactId="EBI-3958099">
        <id>P26371</id>
        <label>KRTAP5-9</label>
    </interactant>
    <organismsDiffer>false</organismsDiffer>
    <experiments>3</experiments>
</comment>
<comment type="interaction">
    <interactant intactId="EBI-2212355">
        <id>Q49AN0</id>
    </interactant>
    <interactant intactId="EBI-22311199">
        <id>Q3LI67</id>
        <label>KRTAP6-3</label>
    </interactant>
    <organismsDiffer>false</organismsDiffer>
    <experiments>3</experiments>
</comment>
<comment type="interaction">
    <interactant intactId="EBI-2212355">
        <id>Q49AN0</id>
    </interactant>
    <interactant intactId="EBI-11958364">
        <id>Q9BYQ0</id>
        <label>KRTAP9-8</label>
    </interactant>
    <organismsDiffer>false</organismsDiffer>
    <experiments>3</experiments>
</comment>
<comment type="interaction">
    <interactant intactId="EBI-2212355">
        <id>Q49AN0</id>
    </interactant>
    <interactant intactId="EBI-2340316">
        <id>O15344</id>
        <label>MID1</label>
    </interactant>
    <organismsDiffer>false</organismsDiffer>
    <experiments>3</experiments>
</comment>
<comment type="interaction">
    <interactant intactId="EBI-2212355">
        <id>Q49AN0</id>
    </interactant>
    <interactant intactId="EBI-742948">
        <id>Q5JR59</id>
        <label>MTUS2</label>
    </interactant>
    <organismsDiffer>false</organismsDiffer>
    <experiments>3</experiments>
</comment>
<comment type="interaction">
    <interactant intactId="EBI-2212355">
        <id>Q49AN0</id>
    </interactant>
    <interactant intactId="EBI-11522433">
        <id>Q5JR59-3</id>
        <label>MTUS2</label>
    </interactant>
    <organismsDiffer>false</organismsDiffer>
    <experiments>5</experiments>
</comment>
<comment type="interaction">
    <interactant intactId="EBI-2212355">
        <id>Q49AN0</id>
    </interactant>
    <interactant intactId="EBI-743949">
        <id>O95544</id>
        <label>NADK</label>
    </interactant>
    <organismsDiffer>false</organismsDiffer>
    <experiments>3</experiments>
</comment>
<comment type="interaction">
    <interactant intactId="EBI-2212355">
        <id>Q49AN0</id>
    </interactant>
    <interactant intactId="EBI-22310682">
        <id>P0DPK4</id>
        <label>NOTCH2NLC</label>
    </interactant>
    <organismsDiffer>false</organismsDiffer>
    <experiments>3</experiments>
</comment>
<comment type="interaction">
    <interactant intactId="EBI-2212355">
        <id>Q49AN0</id>
    </interactant>
    <interactant intactId="EBI-742764">
        <id>O76083</id>
        <label>PDE9A</label>
    </interactant>
    <organismsDiffer>false</organismsDiffer>
    <experiments>3</experiments>
</comment>
<comment type="interaction">
    <interactant intactId="EBI-2212355">
        <id>Q49AN0</id>
    </interactant>
    <interactant intactId="EBI-11524542">
        <id>O76083-2</id>
        <label>PDE9A</label>
    </interactant>
    <organismsDiffer>false</organismsDiffer>
    <experiments>3</experiments>
</comment>
<comment type="interaction">
    <interactant intactId="EBI-2212355">
        <id>Q49AN0</id>
    </interactant>
    <interactant intactId="EBI-79165">
        <id>Q9NRD5</id>
        <label>PICK1</label>
    </interactant>
    <organismsDiffer>false</organismsDiffer>
    <experiments>3</experiments>
</comment>
<comment type="interaction">
    <interactant intactId="EBI-2212355">
        <id>Q49AN0</id>
    </interactant>
    <interactant intactId="EBI-716663">
        <id>P53041</id>
        <label>PPP5C</label>
    </interactant>
    <organismsDiffer>false</organismsDiffer>
    <experiments>3</experiments>
</comment>
<comment type="interaction">
    <interactant intactId="EBI-2212355">
        <id>Q49AN0</id>
    </interactant>
    <interactant intactId="EBI-17181801">
        <id>P0C264</id>
        <label>SBK3</label>
    </interactant>
    <organismsDiffer>false</organismsDiffer>
    <experiments>3</experiments>
</comment>
<comment type="interaction">
    <interactant intactId="EBI-2212355">
        <id>Q49AN0</id>
    </interactant>
    <interactant intactId="EBI-742426">
        <id>Q9H190</id>
        <label>SDCBP2</label>
    </interactant>
    <organismsDiffer>false</organismsDiffer>
    <experiments>3</experiments>
</comment>
<comment type="interaction">
    <interactant intactId="EBI-2212355">
        <id>Q49AN0</id>
    </interactant>
    <interactant intactId="EBI-359224">
        <id>Q13077</id>
        <label>TRAF1</label>
    </interactant>
    <organismsDiffer>false</organismsDiffer>
    <experiments>3</experiments>
</comment>
<comment type="interaction">
    <interactant intactId="EBI-2212355">
        <id>Q49AN0</id>
    </interactant>
    <interactant intactId="EBI-355744">
        <id>Q12933</id>
        <label>TRAF2</label>
    </interactant>
    <organismsDiffer>false</organismsDiffer>
    <experiments>3</experiments>
</comment>
<comment type="interaction">
    <interactant intactId="EBI-2212355">
        <id>Q49AN0</id>
    </interactant>
    <interactant intactId="EBI-11957238">
        <id>Q2TAL6</id>
        <label>VWC2</label>
    </interactant>
    <organismsDiffer>false</organismsDiffer>
    <experiments>3</experiments>
</comment>
<comment type="interaction">
    <interactant intactId="EBI-2212355">
        <id>Q49AN0</id>
    </interactant>
    <interactant intactId="EBI-372110">
        <id>Q9H0D6</id>
        <label>XRN2</label>
    </interactant>
    <organismsDiffer>false</organismsDiffer>
    <experiments>3</experiments>
</comment>
<comment type="interaction">
    <interactant intactId="EBI-2212355">
        <id>Q49AN0</id>
    </interactant>
    <interactant intactId="EBI-12287587">
        <id>B2RXF5</id>
        <label>ZBTB42</label>
    </interactant>
    <organismsDiffer>false</organismsDiffer>
    <experiments>3</experiments>
</comment>
<comment type="subcellular location">
    <subcellularLocation>
        <location evidence="15">Cytoplasm</location>
    </subcellularLocation>
    <subcellularLocation>
        <location evidence="10 15">Nucleus</location>
    </subcellularLocation>
    <text>Translocated to the nucleus through interaction with other Clock proteins such as PER2 or BMAL1.</text>
</comment>
<comment type="alternative products">
    <event type="alternative splicing"/>
    <isoform>
        <id>Q49AN0-1</id>
        <name>1</name>
        <sequence type="displayed"/>
    </isoform>
    <isoform>
        <id>Q49AN0-2</id>
        <name>2</name>
        <sequence type="described" ref="VSP_038970"/>
    </isoform>
</comment>
<comment type="tissue specificity">
    <text evidence="14 15">Expressed in all tissues examined including fetal brain, fibroblasts, heart, brain, placenta, lung, liver, skeletal muscle, kidney, pancreas, spleen, thymus, prostate, testis, ovary, small intestine, colon and leukocytes. Highest levels in heart and skeletal muscle.</text>
</comment>
<comment type="PTM">
    <text evidence="3">Phosphorylation on Ser-266 by MAPK is important for the inhibition of CLOCK-BMAL1-mediated transcriptional activity. Phosphorylation by CSKNE requires interaction with PER1 or PER2. Phosphorylated in a circadian manner at Ser-554 and Ser-558 in the suprachiasmatic nucleus (SCN) and liver. Phosphorylation at Ser-558 by DYRK1A promotes subsequent phosphorylation at Ser-554 by GSK3-beta: the two-step phosphorylation at the neighboring Ser residues leads to its proteasomal degradation.</text>
</comment>
<comment type="PTM">
    <text evidence="3 6 9 10">Ubiquitinated by the SCF(FBXL3) and SCF(FBXL21) complexes, regulating the balance between degradation and stabilization. The SCF(FBXL3) complex is mainly nuclear and mediates ubiquitination and subsequent degradation of CRY2. In contrast, cytoplasmic SCF(FBXL21) complex-mediated ubiquitination leads to stabilize CRY2 and counteract the activity of the SCF(FBXL3) complex. The SCF(FBXL3) and SCF(FBXL21) complexes probably mediate ubiquitination at different Lys residues. The SCF(FBXL3) complex recognizes and binds CRY2 phosphorylated at Ser-554 and Ser-558. Ubiquitination may be inhibited by PER2. Deubiquitinated by USP7 (By similarity).</text>
</comment>
<comment type="similarity">
    <text evidence="17">Belongs to the DNA photolyase class-1 family.</text>
</comment>
<comment type="sequence caution" evidence="17">
    <conflict type="miscellaneous discrepancy">
        <sequence resource="EMBL-CDS" id="AAH35161"/>
    </conflict>
    <text>Probable cloning artifact. Aberrant splice sites.</text>
</comment>
<comment type="sequence caution" evidence="17">
    <conflict type="erroneous termination">
        <sequence resource="EMBL-CDS" id="BAG57993"/>
    </conflict>
    <text>Truncated C-terminus.</text>
</comment>
<comment type="sequence caution" evidence="17">
    <conflict type="erroneous translation">
        <sequence resource="EMBL-CDS" id="BAG57993"/>
    </conflict>
    <text>Wrong choice of CDS.</text>
</comment>
<comment type="sequence caution" evidence="17">
    <conflict type="erroneous initiation">
        <sequence resource="EMBL-CDS" id="BAG64048"/>
    </conflict>
    <text>Extended N-terminus.</text>
</comment>
<comment type="online information" name="Wikipedia">
    <link uri="https://en.wikipedia.org/wiki/Cryptochrome"/>
    <text>Cryptochrome entry</text>
</comment>
<accession>Q49AN0</accession>
<accession>B4DH32</accession>
<accession>B4DZD6</accession>
<accession>O75148</accession>
<accession>Q8IV71</accession>
<protein>
    <recommendedName>
        <fullName>Cryptochrome-2</fullName>
    </recommendedName>
</protein>
<sequence>MAATVATAAAVAPAPAPGTDSASSVHWFRKGLRLHDNPALLAAVRGARCVRCVYILDPWFAASSSVGINRWRFLLQSLEDLDTSLRKLNSRLFVVRGQPADVFPRLFKEWGVTRLTFEYDSEPFGKERDAAIMKMAKEAGVEVVTENSHTLYDLDRIIELNGQKPPLTYKRFQAIISRMELPKKPVGLVTSQQMESCRAEIQENHDETYGVPSLEELGFPTEGLGPAVWQGGETEALARLDKHLERKAWVANYERPRMNANSLLASPTGLSPYLRFGCLSCRLFYYRLWDLYKKVKRNSTPPLSLFGQLLWREFFYTAATNNPRFDRMEGNPICIQIPWDRNPEALAKWAEGKTGFPWIDAIMTQLRQEGWIHHLARHAVACFLTRGDLWVSWESGVRVFDELLLDADFSVNAGSWMWLSCSAFFQQFFHCYCPVGFGRRTDPSGDYIRRYLPKLKAFPSRYIYEPWNAPESIQKAAKCIIGVDYPRPIVNHAETSRLNIERMKQIYQQLSRYRGLCLLASVPSCVEDLSHPVAEPSSSQAGSMSSAGPRPLPSGPASPKRKLEAAEEPPGEELSKRARVAELPTPELPSKDA</sequence>